<organism>
    <name type="scientific">Marinomonas sp. (strain MWYL1)</name>
    <dbReference type="NCBI Taxonomy" id="400668"/>
    <lineage>
        <taxon>Bacteria</taxon>
        <taxon>Pseudomonadati</taxon>
        <taxon>Pseudomonadota</taxon>
        <taxon>Gammaproteobacteria</taxon>
        <taxon>Oceanospirillales</taxon>
        <taxon>Oceanospirillaceae</taxon>
        <taxon>Marinomonas</taxon>
    </lineage>
</organism>
<protein>
    <recommendedName>
        <fullName evidence="1">3-isopropylmalate dehydratase large subunit</fullName>
        <ecNumber evidence="1">4.2.1.33</ecNumber>
    </recommendedName>
    <alternativeName>
        <fullName evidence="1">Alpha-IPM isomerase</fullName>
        <shortName evidence="1">IPMI</shortName>
    </alternativeName>
    <alternativeName>
        <fullName evidence="1">Isopropylmalate isomerase</fullName>
    </alternativeName>
</protein>
<dbReference type="EC" id="4.2.1.33" evidence="1"/>
<dbReference type="EMBL" id="CP000749">
    <property type="protein sequence ID" value="ABR71013.1"/>
    <property type="molecule type" value="Genomic_DNA"/>
</dbReference>
<dbReference type="SMR" id="A6VX34"/>
<dbReference type="STRING" id="400668.Mmwyl1_2091"/>
<dbReference type="KEGG" id="mmw:Mmwyl1_2091"/>
<dbReference type="eggNOG" id="COG0065">
    <property type="taxonomic scope" value="Bacteria"/>
</dbReference>
<dbReference type="HOGENOM" id="CLU_006714_3_4_6"/>
<dbReference type="OrthoDB" id="9802769at2"/>
<dbReference type="UniPathway" id="UPA00048">
    <property type="reaction ID" value="UER00071"/>
</dbReference>
<dbReference type="GO" id="GO:0003861">
    <property type="term" value="F:3-isopropylmalate dehydratase activity"/>
    <property type="evidence" value="ECO:0007669"/>
    <property type="project" value="UniProtKB-UniRule"/>
</dbReference>
<dbReference type="GO" id="GO:0051539">
    <property type="term" value="F:4 iron, 4 sulfur cluster binding"/>
    <property type="evidence" value="ECO:0007669"/>
    <property type="project" value="UniProtKB-KW"/>
</dbReference>
<dbReference type="GO" id="GO:0046872">
    <property type="term" value="F:metal ion binding"/>
    <property type="evidence" value="ECO:0007669"/>
    <property type="project" value="UniProtKB-KW"/>
</dbReference>
<dbReference type="GO" id="GO:0009098">
    <property type="term" value="P:L-leucine biosynthetic process"/>
    <property type="evidence" value="ECO:0007669"/>
    <property type="project" value="UniProtKB-UniRule"/>
</dbReference>
<dbReference type="CDD" id="cd01583">
    <property type="entry name" value="IPMI"/>
    <property type="match status" value="1"/>
</dbReference>
<dbReference type="FunFam" id="3.30.499.10:FF:000007">
    <property type="entry name" value="3-isopropylmalate dehydratase large subunit"/>
    <property type="match status" value="1"/>
</dbReference>
<dbReference type="Gene3D" id="3.30.499.10">
    <property type="entry name" value="Aconitase, domain 3"/>
    <property type="match status" value="2"/>
</dbReference>
<dbReference type="HAMAP" id="MF_01026">
    <property type="entry name" value="LeuC_type1"/>
    <property type="match status" value="1"/>
</dbReference>
<dbReference type="InterPro" id="IPR004430">
    <property type="entry name" value="3-IsopropMal_deHydase_lsu"/>
</dbReference>
<dbReference type="InterPro" id="IPR015931">
    <property type="entry name" value="Acnase/IPM_dHydase_lsu_aba_1/3"/>
</dbReference>
<dbReference type="InterPro" id="IPR001030">
    <property type="entry name" value="Acoase/IPM_deHydtase_lsu_aba"/>
</dbReference>
<dbReference type="InterPro" id="IPR018136">
    <property type="entry name" value="Aconitase_4Fe-4S_BS"/>
</dbReference>
<dbReference type="InterPro" id="IPR036008">
    <property type="entry name" value="Aconitase_4Fe-4S_dom"/>
</dbReference>
<dbReference type="InterPro" id="IPR050067">
    <property type="entry name" value="IPM_dehydratase_rel_enz"/>
</dbReference>
<dbReference type="InterPro" id="IPR033941">
    <property type="entry name" value="IPMI_cat"/>
</dbReference>
<dbReference type="NCBIfam" id="TIGR00170">
    <property type="entry name" value="leuC"/>
    <property type="match status" value="1"/>
</dbReference>
<dbReference type="NCBIfam" id="NF004016">
    <property type="entry name" value="PRK05478.1"/>
    <property type="match status" value="1"/>
</dbReference>
<dbReference type="NCBIfam" id="NF009116">
    <property type="entry name" value="PRK12466.1"/>
    <property type="match status" value="1"/>
</dbReference>
<dbReference type="PANTHER" id="PTHR43822:SF9">
    <property type="entry name" value="3-ISOPROPYLMALATE DEHYDRATASE"/>
    <property type="match status" value="1"/>
</dbReference>
<dbReference type="PANTHER" id="PTHR43822">
    <property type="entry name" value="HOMOACONITASE, MITOCHONDRIAL-RELATED"/>
    <property type="match status" value="1"/>
</dbReference>
<dbReference type="Pfam" id="PF00330">
    <property type="entry name" value="Aconitase"/>
    <property type="match status" value="1"/>
</dbReference>
<dbReference type="PRINTS" id="PR00415">
    <property type="entry name" value="ACONITASE"/>
</dbReference>
<dbReference type="SUPFAM" id="SSF53732">
    <property type="entry name" value="Aconitase iron-sulfur domain"/>
    <property type="match status" value="1"/>
</dbReference>
<dbReference type="PROSITE" id="PS00450">
    <property type="entry name" value="ACONITASE_1"/>
    <property type="match status" value="1"/>
</dbReference>
<dbReference type="PROSITE" id="PS01244">
    <property type="entry name" value="ACONITASE_2"/>
    <property type="match status" value="1"/>
</dbReference>
<keyword id="KW-0004">4Fe-4S</keyword>
<keyword id="KW-0028">Amino-acid biosynthesis</keyword>
<keyword id="KW-0100">Branched-chain amino acid biosynthesis</keyword>
<keyword id="KW-0408">Iron</keyword>
<keyword id="KW-0411">Iron-sulfur</keyword>
<keyword id="KW-0432">Leucine biosynthesis</keyword>
<keyword id="KW-0456">Lyase</keyword>
<keyword id="KW-0479">Metal-binding</keyword>
<name>LEUC_MARMS</name>
<feature type="chain" id="PRO_1000084215" description="3-isopropylmalate dehydratase large subunit">
    <location>
        <begin position="1"/>
        <end position="475"/>
    </location>
</feature>
<feature type="binding site" evidence="1">
    <location>
        <position position="353"/>
    </location>
    <ligand>
        <name>[4Fe-4S] cluster</name>
        <dbReference type="ChEBI" id="CHEBI:49883"/>
    </ligand>
</feature>
<feature type="binding site" evidence="1">
    <location>
        <position position="414"/>
    </location>
    <ligand>
        <name>[4Fe-4S] cluster</name>
        <dbReference type="ChEBI" id="CHEBI:49883"/>
    </ligand>
</feature>
<feature type="binding site" evidence="1">
    <location>
        <position position="417"/>
    </location>
    <ligand>
        <name>[4Fe-4S] cluster</name>
        <dbReference type="ChEBI" id="CHEBI:49883"/>
    </ligand>
</feature>
<gene>
    <name evidence="1" type="primary">leuC</name>
    <name type="ordered locus">Mmwyl1_2091</name>
</gene>
<proteinExistence type="inferred from homology"/>
<sequence length="475" mass="51186">MSGKTLYDKLWDSHLVQQRDDGSALIYIDLQLLHEVTSPQAFEGLRLAGRKPWRVSSSLATPDHNVPTTKKERISGVDGIEDPVSKIQVTTLDDNCNEFGITEFNMKDIRQGIVHVVGPEQGATLPGMTVVCGDSHTSTHGAFGALAHGIGTSEVEHVLATQCLVQKKSRNMLVRVDGELSPWVSAKDVVLAIIGAIGTAGGTGYAIEFGGTGIQSLSMEGRMTVCNMAIEAGARVGLIAVDDTTIEYVKGRPYAPKGEHWEMAVEAWKDLVSDKDAQFDEVVVIKAEDIKPQVTWGTSPEMVIAIDEPIPRAEDQKDPVKKEGYARAWKYMGLEGKSMLSDIVLDRVFIGSCTNSRIEDLRIAAQVVKGRKVASTLKQAIVVPGSGLVKAQAEKEGLHEIFEAAGLEWREPGCSMCLAMNADKLGAGEHSASTSNRNFEGRQGFGGRTHLVSPAMAAAAAIAGHFVDVNEFVKH</sequence>
<evidence type="ECO:0000255" key="1">
    <source>
        <dbReference type="HAMAP-Rule" id="MF_01026"/>
    </source>
</evidence>
<reference key="1">
    <citation type="submission" date="2007-06" db="EMBL/GenBank/DDBJ databases">
        <title>Complete sequence of Marinomonas sp. MWYL1.</title>
        <authorList>
            <consortium name="US DOE Joint Genome Institute"/>
            <person name="Copeland A."/>
            <person name="Lucas S."/>
            <person name="Lapidus A."/>
            <person name="Barry K."/>
            <person name="Glavina del Rio T."/>
            <person name="Dalin E."/>
            <person name="Tice H."/>
            <person name="Pitluck S."/>
            <person name="Kiss H."/>
            <person name="Brettin T."/>
            <person name="Bruce D."/>
            <person name="Detter J.C."/>
            <person name="Han C."/>
            <person name="Schmutz J."/>
            <person name="Larimer F."/>
            <person name="Land M."/>
            <person name="Hauser L."/>
            <person name="Kyrpides N."/>
            <person name="Kim E."/>
            <person name="Johnston A.W.B."/>
            <person name="Todd J.D."/>
            <person name="Rogers R."/>
            <person name="Wexler M."/>
            <person name="Bond P.L."/>
            <person name="Li Y."/>
            <person name="Richardson P."/>
        </authorList>
    </citation>
    <scope>NUCLEOTIDE SEQUENCE [LARGE SCALE GENOMIC DNA]</scope>
    <source>
        <strain>MWYL1</strain>
    </source>
</reference>
<comment type="function">
    <text evidence="1">Catalyzes the isomerization between 2-isopropylmalate and 3-isopropylmalate, via the formation of 2-isopropylmaleate.</text>
</comment>
<comment type="catalytic activity">
    <reaction evidence="1">
        <text>(2R,3S)-3-isopropylmalate = (2S)-2-isopropylmalate</text>
        <dbReference type="Rhea" id="RHEA:32287"/>
        <dbReference type="ChEBI" id="CHEBI:1178"/>
        <dbReference type="ChEBI" id="CHEBI:35121"/>
        <dbReference type="EC" id="4.2.1.33"/>
    </reaction>
</comment>
<comment type="cofactor">
    <cofactor evidence="1">
        <name>[4Fe-4S] cluster</name>
        <dbReference type="ChEBI" id="CHEBI:49883"/>
    </cofactor>
    <text evidence="1">Binds 1 [4Fe-4S] cluster per subunit.</text>
</comment>
<comment type="pathway">
    <text evidence="1">Amino-acid biosynthesis; L-leucine biosynthesis; L-leucine from 3-methyl-2-oxobutanoate: step 2/4.</text>
</comment>
<comment type="subunit">
    <text evidence="1">Heterodimer of LeuC and LeuD.</text>
</comment>
<comment type="similarity">
    <text evidence="1">Belongs to the aconitase/IPM isomerase family. LeuC type 1 subfamily.</text>
</comment>
<accession>A6VX34</accession>